<organism>
    <name type="scientific">Frankia alni (strain DSM 45986 / CECT 9034 / ACN14a)</name>
    <dbReference type="NCBI Taxonomy" id="326424"/>
    <lineage>
        <taxon>Bacteria</taxon>
        <taxon>Bacillati</taxon>
        <taxon>Actinomycetota</taxon>
        <taxon>Actinomycetes</taxon>
        <taxon>Frankiales</taxon>
        <taxon>Frankiaceae</taxon>
        <taxon>Frankia</taxon>
    </lineage>
</organism>
<dbReference type="EC" id="7.6.2.11" evidence="1"/>
<dbReference type="EMBL" id="CT573213">
    <property type="protein sequence ID" value="CAJ65455.1"/>
    <property type="molecule type" value="Genomic_DNA"/>
</dbReference>
<dbReference type="RefSeq" id="WP_011607867.1">
    <property type="nucleotide sequence ID" value="NC_008278.1"/>
</dbReference>
<dbReference type="SMR" id="Q0RAT5"/>
<dbReference type="STRING" id="326424.FRAAL6832"/>
<dbReference type="KEGG" id="fal:FRAAL6832"/>
<dbReference type="eggNOG" id="COG3842">
    <property type="taxonomic scope" value="Bacteria"/>
</dbReference>
<dbReference type="HOGENOM" id="CLU_000604_1_1_11"/>
<dbReference type="OrthoDB" id="7838608at2"/>
<dbReference type="Proteomes" id="UP000000657">
    <property type="component" value="Chromosome"/>
</dbReference>
<dbReference type="GO" id="GO:0043190">
    <property type="term" value="C:ATP-binding cassette (ABC) transporter complex"/>
    <property type="evidence" value="ECO:0007669"/>
    <property type="project" value="InterPro"/>
</dbReference>
<dbReference type="GO" id="GO:0015594">
    <property type="term" value="F:ABC-type putrescine transporter activity"/>
    <property type="evidence" value="ECO:0007669"/>
    <property type="project" value="InterPro"/>
</dbReference>
<dbReference type="GO" id="GO:0005524">
    <property type="term" value="F:ATP binding"/>
    <property type="evidence" value="ECO:0007669"/>
    <property type="project" value="UniProtKB-KW"/>
</dbReference>
<dbReference type="GO" id="GO:0016887">
    <property type="term" value="F:ATP hydrolysis activity"/>
    <property type="evidence" value="ECO:0007669"/>
    <property type="project" value="InterPro"/>
</dbReference>
<dbReference type="CDD" id="cd03300">
    <property type="entry name" value="ABC_PotA_N"/>
    <property type="match status" value="1"/>
</dbReference>
<dbReference type="FunFam" id="3.40.50.300:FF:000042">
    <property type="entry name" value="Maltose/maltodextrin ABC transporter, ATP-binding protein"/>
    <property type="match status" value="1"/>
</dbReference>
<dbReference type="Gene3D" id="2.40.50.100">
    <property type="match status" value="1"/>
</dbReference>
<dbReference type="Gene3D" id="3.40.50.300">
    <property type="entry name" value="P-loop containing nucleotide triphosphate hydrolases"/>
    <property type="match status" value="1"/>
</dbReference>
<dbReference type="InterPro" id="IPR003593">
    <property type="entry name" value="AAA+_ATPase"/>
</dbReference>
<dbReference type="InterPro" id="IPR050093">
    <property type="entry name" value="ABC_SmlMolc_Importer"/>
</dbReference>
<dbReference type="InterPro" id="IPR003439">
    <property type="entry name" value="ABC_transporter-like_ATP-bd"/>
</dbReference>
<dbReference type="InterPro" id="IPR017871">
    <property type="entry name" value="ABC_transporter-like_CS"/>
</dbReference>
<dbReference type="InterPro" id="IPR008995">
    <property type="entry name" value="Mo/tungstate-bd_C_term_dom"/>
</dbReference>
<dbReference type="InterPro" id="IPR027417">
    <property type="entry name" value="P-loop_NTPase"/>
</dbReference>
<dbReference type="InterPro" id="IPR005893">
    <property type="entry name" value="PotA-like"/>
</dbReference>
<dbReference type="InterPro" id="IPR017879">
    <property type="entry name" value="PotA_ATP-bd"/>
</dbReference>
<dbReference type="InterPro" id="IPR013611">
    <property type="entry name" value="Transp-assoc_OB_typ2"/>
</dbReference>
<dbReference type="NCBIfam" id="TIGR01187">
    <property type="entry name" value="potA"/>
    <property type="match status" value="1"/>
</dbReference>
<dbReference type="PANTHER" id="PTHR42781">
    <property type="entry name" value="SPERMIDINE/PUTRESCINE IMPORT ATP-BINDING PROTEIN POTA"/>
    <property type="match status" value="1"/>
</dbReference>
<dbReference type="PANTHER" id="PTHR42781:SF4">
    <property type="entry name" value="SPERMIDINE_PUTRESCINE IMPORT ATP-BINDING PROTEIN POTA"/>
    <property type="match status" value="1"/>
</dbReference>
<dbReference type="Pfam" id="PF00005">
    <property type="entry name" value="ABC_tran"/>
    <property type="match status" value="1"/>
</dbReference>
<dbReference type="Pfam" id="PF08402">
    <property type="entry name" value="TOBE_2"/>
    <property type="match status" value="1"/>
</dbReference>
<dbReference type="SMART" id="SM00382">
    <property type="entry name" value="AAA"/>
    <property type="match status" value="1"/>
</dbReference>
<dbReference type="SUPFAM" id="SSF50331">
    <property type="entry name" value="MOP-like"/>
    <property type="match status" value="1"/>
</dbReference>
<dbReference type="SUPFAM" id="SSF52540">
    <property type="entry name" value="P-loop containing nucleoside triphosphate hydrolases"/>
    <property type="match status" value="1"/>
</dbReference>
<dbReference type="PROSITE" id="PS00211">
    <property type="entry name" value="ABC_TRANSPORTER_1"/>
    <property type="match status" value="1"/>
</dbReference>
<dbReference type="PROSITE" id="PS50893">
    <property type="entry name" value="ABC_TRANSPORTER_2"/>
    <property type="match status" value="1"/>
</dbReference>
<dbReference type="PROSITE" id="PS51305">
    <property type="entry name" value="POTA"/>
    <property type="match status" value="1"/>
</dbReference>
<keyword id="KW-0067">ATP-binding</keyword>
<keyword id="KW-1003">Cell membrane</keyword>
<keyword id="KW-0472">Membrane</keyword>
<keyword id="KW-0547">Nucleotide-binding</keyword>
<keyword id="KW-1185">Reference proteome</keyword>
<keyword id="KW-1278">Translocase</keyword>
<keyword id="KW-0813">Transport</keyword>
<sequence>MTATSGARTSDARTSGARTSDAGIGSPAAIELVGVAKDYQTRGRAVPAVSRVDLAIRPGEFFSLLGPSGCGKSTTLRMIAGFEEPTRGRILLQGRDVTAVPPNRRDVNLVFQSYALFPHLDVAGNVAFGLRRRGVKGRELRERVGAMLDLVELSELADRRPRELSGGQQQRVALARALVNRPAALLLDEPLGALDLKLRQTMQIQLKAIQREVGITFLYVTHDQGEALTMSDRIAVMNGGRVEQLASPRDIYERPRTRFVAGFIGTSNLLRRTVRALDAAGPGGRPTVVLDAGTDERLSAPLHPPTGPLRAGDQVELTVRPEKIEMSVSRPDGPGCALRGRIVEVVYLGTYTTYTVATHGGTEITVFWQNSTGAGNVAERGDEIWLSWLPEHSYVLPEPVALPEPVALPGSVVPPETVNQPDSVGPPDSIIPPHSVVAPDSVDPRETVVPAAGTSADPAAYRISH</sequence>
<proteinExistence type="inferred from homology"/>
<protein>
    <recommendedName>
        <fullName evidence="1">Spermidine/putrescine import ATP-binding protein PotA</fullName>
        <ecNumber evidence="1">7.6.2.11</ecNumber>
    </recommendedName>
</protein>
<name>POTA_FRAAA</name>
<accession>Q0RAT5</accession>
<reference key="1">
    <citation type="journal article" date="2007" name="Genome Res.">
        <title>Genome characteristics of facultatively symbiotic Frankia sp. strains reflect host range and host plant biogeography.</title>
        <authorList>
            <person name="Normand P."/>
            <person name="Lapierre P."/>
            <person name="Tisa L.S."/>
            <person name="Gogarten J.P."/>
            <person name="Alloisio N."/>
            <person name="Bagnarol E."/>
            <person name="Bassi C.A."/>
            <person name="Berry A.M."/>
            <person name="Bickhart D.M."/>
            <person name="Choisne N."/>
            <person name="Couloux A."/>
            <person name="Cournoyer B."/>
            <person name="Cruveiller S."/>
            <person name="Daubin V."/>
            <person name="Demange N."/>
            <person name="Francino M.P."/>
            <person name="Goltsman E."/>
            <person name="Huang Y."/>
            <person name="Kopp O.R."/>
            <person name="Labarre L."/>
            <person name="Lapidus A."/>
            <person name="Lavire C."/>
            <person name="Marechal J."/>
            <person name="Martinez M."/>
            <person name="Mastronunzio J.E."/>
            <person name="Mullin B.C."/>
            <person name="Niemann J."/>
            <person name="Pujic P."/>
            <person name="Rawnsley T."/>
            <person name="Rouy Z."/>
            <person name="Schenowitz C."/>
            <person name="Sellstedt A."/>
            <person name="Tavares F."/>
            <person name="Tomkins J.P."/>
            <person name="Vallenet D."/>
            <person name="Valverde C."/>
            <person name="Wall L.G."/>
            <person name="Wang Y."/>
            <person name="Medigue C."/>
            <person name="Benson D.R."/>
        </authorList>
    </citation>
    <scope>NUCLEOTIDE SEQUENCE [LARGE SCALE GENOMIC DNA]</scope>
    <source>
        <strain>DSM 45986 / CECT 9034 / ACN14a</strain>
    </source>
</reference>
<comment type="function">
    <text evidence="1">Part of the ABC transporter complex PotABCD involved in spermidine/putrescine import. Responsible for energy coupling to the transport system.</text>
</comment>
<comment type="catalytic activity">
    <reaction evidence="1">
        <text>ATP + H2O + polyamine-[polyamine-binding protein]Side 1 = ADP + phosphate + polyamineSide 2 + [polyamine-binding protein]Side 1.</text>
        <dbReference type="EC" id="7.6.2.11"/>
    </reaction>
</comment>
<comment type="subunit">
    <text evidence="1">The complex is composed of two ATP-binding proteins (PotA), two transmembrane proteins (PotB and PotC) and a solute-binding protein (PotD).</text>
</comment>
<comment type="subcellular location">
    <subcellularLocation>
        <location evidence="1">Cell membrane</location>
        <topology evidence="1">Peripheral membrane protein</topology>
    </subcellularLocation>
</comment>
<comment type="similarity">
    <text evidence="1">Belongs to the ABC transporter superfamily. Spermidine/putrescine importer (TC 3.A.1.11.1) family.</text>
</comment>
<gene>
    <name evidence="1" type="primary">potA</name>
    <name type="ordered locus">FRAAL6832</name>
</gene>
<feature type="chain" id="PRO_0000286219" description="Spermidine/putrescine import ATP-binding protein PotA">
    <location>
        <begin position="1"/>
        <end position="465"/>
    </location>
</feature>
<feature type="domain" description="ABC transporter" evidence="1">
    <location>
        <begin position="30"/>
        <end position="264"/>
    </location>
</feature>
<feature type="region of interest" description="Disordered" evidence="2">
    <location>
        <begin position="1"/>
        <end position="21"/>
    </location>
</feature>
<feature type="compositionally biased region" description="Polar residues" evidence="2">
    <location>
        <begin position="1"/>
        <end position="18"/>
    </location>
</feature>
<feature type="binding site" evidence="1">
    <location>
        <begin position="66"/>
        <end position="73"/>
    </location>
    <ligand>
        <name>ATP</name>
        <dbReference type="ChEBI" id="CHEBI:30616"/>
    </ligand>
</feature>
<evidence type="ECO:0000255" key="1">
    <source>
        <dbReference type="HAMAP-Rule" id="MF_01726"/>
    </source>
</evidence>
<evidence type="ECO:0000256" key="2">
    <source>
        <dbReference type="SAM" id="MobiDB-lite"/>
    </source>
</evidence>